<protein>
    <recommendedName>
        <fullName evidence="5">Flavonoid 3'-monooxygenase CYP75B137</fullName>
        <ecNumber evidence="3">1.14.14.82</ecNumber>
    </recommendedName>
    <alternativeName>
        <fullName evidence="4">Cytochrome P450 1</fullName>
        <shortName evidence="4">CcCYP1</shortName>
    </alternativeName>
    <alternativeName>
        <fullName evidence="4">Cytochrome P450 75B137</fullName>
    </alternativeName>
    <alternativeName>
        <fullName evidence="5">Flavonoid 3'-hydroxylase CYP75B137</fullName>
    </alternativeName>
</protein>
<comment type="function">
    <text evidence="3">Flavonoid 3'-hydroxylase that catalyzes the 3'-hydroxylation of flavanones, dihydroflavonols and flavonols (PubMed:31004005). Converts narigenin to eriodictyol, dihydrokaempferol to dihydroquercetin and kaempferol to quercetin (PubMed:31004005).</text>
</comment>
<comment type="catalytic activity">
    <reaction evidence="3">
        <text>a 3'-unsubstituted flavone + reduced [NADPH--hemoprotein reductase] + O2 = a 3'-hydroxyflavone + oxidized [NADPH--hemoprotein reductase] + H2O + H(+)</text>
        <dbReference type="Rhea" id="RHEA:16337"/>
        <dbReference type="Rhea" id="RHEA-COMP:11964"/>
        <dbReference type="Rhea" id="RHEA-COMP:11965"/>
        <dbReference type="ChEBI" id="CHEBI:15377"/>
        <dbReference type="ChEBI" id="CHEBI:15378"/>
        <dbReference type="ChEBI" id="CHEBI:15379"/>
        <dbReference type="ChEBI" id="CHEBI:27741"/>
        <dbReference type="ChEBI" id="CHEBI:57618"/>
        <dbReference type="ChEBI" id="CHEBI:58210"/>
        <dbReference type="ChEBI" id="CHEBI:138726"/>
        <dbReference type="EC" id="1.14.14.82"/>
    </reaction>
    <physiologicalReaction direction="left-to-right" evidence="3">
        <dbReference type="Rhea" id="RHEA:16338"/>
    </physiologicalReaction>
</comment>
<comment type="catalytic activity">
    <reaction evidence="3">
        <text>(2S)-naringenin + reduced [NADPH--hemoprotein reductase] + O2 = (S)-eriodictyol + oxidized [NADPH--hemoprotein reductase] + H2O + H(+)</text>
        <dbReference type="Rhea" id="RHEA:61096"/>
        <dbReference type="Rhea" id="RHEA-COMP:11964"/>
        <dbReference type="Rhea" id="RHEA-COMP:11965"/>
        <dbReference type="ChEBI" id="CHEBI:15377"/>
        <dbReference type="ChEBI" id="CHEBI:15378"/>
        <dbReference type="ChEBI" id="CHEBI:15379"/>
        <dbReference type="ChEBI" id="CHEBI:17846"/>
        <dbReference type="ChEBI" id="CHEBI:28412"/>
        <dbReference type="ChEBI" id="CHEBI:57618"/>
        <dbReference type="ChEBI" id="CHEBI:58210"/>
    </reaction>
    <physiologicalReaction direction="left-to-right" evidence="3">
        <dbReference type="Rhea" id="RHEA:61097"/>
    </physiologicalReaction>
</comment>
<comment type="catalytic activity">
    <reaction evidence="3">
        <text>(2R,3R)-dihydrokaempferol + reduced [NADPH--hemoprotein reductase] + O2 = (2R,3R)-dihydroquercetin + oxidized [NADPH--hemoprotein reductase] + H2O + H(+)</text>
        <dbReference type="Rhea" id="RHEA:61112"/>
        <dbReference type="Rhea" id="RHEA-COMP:11964"/>
        <dbReference type="Rhea" id="RHEA-COMP:11965"/>
        <dbReference type="ChEBI" id="CHEBI:15377"/>
        <dbReference type="ChEBI" id="CHEBI:15378"/>
        <dbReference type="ChEBI" id="CHEBI:15379"/>
        <dbReference type="ChEBI" id="CHEBI:15401"/>
        <dbReference type="ChEBI" id="CHEBI:17948"/>
        <dbReference type="ChEBI" id="CHEBI:57618"/>
        <dbReference type="ChEBI" id="CHEBI:58210"/>
    </reaction>
    <physiologicalReaction direction="left-to-right" evidence="3">
        <dbReference type="Rhea" id="RHEA:61113"/>
    </physiologicalReaction>
</comment>
<comment type="catalytic activity">
    <reaction evidence="3">
        <text>kaempferol + reduced [NADPH--hemoprotein reductase] + O2 = quercetin + oxidized [NADPH--hemoprotein reductase] + H2O + H(+)</text>
        <dbReference type="Rhea" id="RHEA:61124"/>
        <dbReference type="Rhea" id="RHEA-COMP:11964"/>
        <dbReference type="Rhea" id="RHEA-COMP:11965"/>
        <dbReference type="ChEBI" id="CHEBI:15377"/>
        <dbReference type="ChEBI" id="CHEBI:15378"/>
        <dbReference type="ChEBI" id="CHEBI:15379"/>
        <dbReference type="ChEBI" id="CHEBI:57618"/>
        <dbReference type="ChEBI" id="CHEBI:57694"/>
        <dbReference type="ChEBI" id="CHEBI:58210"/>
        <dbReference type="ChEBI" id="CHEBI:58573"/>
    </reaction>
    <physiologicalReaction direction="left-to-right" evidence="3">
        <dbReference type="Rhea" id="RHEA:61125"/>
    </physiologicalReaction>
</comment>
<comment type="cofactor">
    <cofactor evidence="1">
        <name>heme</name>
        <dbReference type="ChEBI" id="CHEBI:30413"/>
    </cofactor>
</comment>
<comment type="pathway">
    <text evidence="5">Flavonoid metabolism.</text>
</comment>
<comment type="subcellular location">
    <subcellularLocation>
        <location evidence="2">Membrane</location>
        <topology evidence="2">Single-pass membrane protein</topology>
    </subcellularLocation>
</comment>
<comment type="tissue specificity">
    <text evidence="3">Expressed in young cromes.</text>
</comment>
<comment type="similarity">
    <text evidence="5">Belongs to the cytochrome P450 family.</text>
</comment>
<name>CYP1_CROXC</name>
<sequence length="508" mass="56800">MLTFFFLWISTLLLSSFIVYLLYRRRSAQCPPLPPGPNGWPILGNLPQLGAKPHQTLDALSKQYGPLFRLRLGSVNVVVASSSAVAAQFLRTHDVNFSNRPPNSGAEHVAYNYQDLVFAPYGPRWRMLRKLCSVHLFSLKALDDLRPVRQGEVACLVRNLRRHADTGVLVNLGKALNVCATNALARAMLGRRVFADEDAQLAEADEFKEMVVELMRLAGVFNVGDFVPGLGWLDLQGVVGKMKRLHRRYDAFLDRVIEENQANAKSGDLLSVLIRLKEADAEGEIKLNNTDIKALLLNLFTAGTDTSSSTVEWVLAELIRHPDILQKTQHELDSVIGRDRLVAESDLPNLPYLQAVVKETFRLHPSTPLSLPRMASEECIVNGYKIPKHATLLVNVWSIGRDAAVWNDPLEFRPSRFLPGGEREHVDVKGNDFEVIPFGAGRRICAGLSLGLRMVQFMTATIVHAYDWSLPKGQECQKLDMEEAYGLTLQRAVPLMVQPIPRLSHKAY</sequence>
<evidence type="ECO:0000250" key="1">
    <source>
        <dbReference type="UniProtKB" id="Q96242"/>
    </source>
</evidence>
<evidence type="ECO:0000255" key="2"/>
<evidence type="ECO:0000269" key="3">
    <source>
    </source>
</evidence>
<evidence type="ECO:0000303" key="4">
    <source>
    </source>
</evidence>
<evidence type="ECO:0000305" key="5"/>
<accession>A0A4D6Q415</accession>
<keyword id="KW-0284">Flavonoid biosynthesis</keyword>
<keyword id="KW-0349">Heme</keyword>
<keyword id="KW-0408">Iron</keyword>
<keyword id="KW-0472">Membrane</keyword>
<keyword id="KW-0479">Metal-binding</keyword>
<keyword id="KW-0503">Monooxygenase</keyword>
<keyword id="KW-0521">NADP</keyword>
<keyword id="KW-0560">Oxidoreductase</keyword>
<keyword id="KW-0812">Transmembrane</keyword>
<keyword id="KW-1133">Transmembrane helix</keyword>
<organism>
    <name type="scientific">Crocosmia x crocosmiiflora</name>
    <name type="common">Montbretia</name>
    <name type="synonym">Crocosmia aurea x Crocosmia pottsii</name>
    <dbReference type="NCBI Taxonomy" id="1053288"/>
    <lineage>
        <taxon>Eukaryota</taxon>
        <taxon>Viridiplantae</taxon>
        <taxon>Streptophyta</taxon>
        <taxon>Embryophyta</taxon>
        <taxon>Tracheophyta</taxon>
        <taxon>Spermatophyta</taxon>
        <taxon>Magnoliopsida</taxon>
        <taxon>Liliopsida</taxon>
        <taxon>Asparagales</taxon>
        <taxon>Iridaceae</taxon>
        <taxon>Crocoideae</taxon>
        <taxon>Freesieae</taxon>
        <taxon>Crocosmia</taxon>
    </lineage>
</organism>
<gene>
    <name evidence="4" type="primary">CYP75B137</name>
    <name evidence="4" type="synonym">CYP1</name>
</gene>
<reference key="1">
    <citation type="journal article" date="2019" name="Plant Physiol.">
        <title>Flavonol biosynthesis genes and their use in engineering the plant antidiabetic metabolite montbretin A.</title>
        <authorList>
            <person name="Irmisch S."/>
            <person name="Ruebsam H."/>
            <person name="Jancsik S."/>
            <person name="Man Saint Yuen M."/>
            <person name="Madilao L.L."/>
            <person name="Bohlmann J."/>
        </authorList>
    </citation>
    <scope>NUCLEOTIDE SEQUENCE [MRNA]</scope>
    <scope>FUNCTION</scope>
    <scope>CATALYTIC ACTIVITY</scope>
    <scope>TISSUE SPECIFICITY</scope>
</reference>
<dbReference type="EC" id="1.14.14.82" evidence="3"/>
<dbReference type="EMBL" id="MK562520">
    <property type="protein sequence ID" value="QCF41215.1"/>
    <property type="molecule type" value="mRNA"/>
</dbReference>
<dbReference type="SMR" id="A0A4D6Q415"/>
<dbReference type="GO" id="GO:0016020">
    <property type="term" value="C:membrane"/>
    <property type="evidence" value="ECO:0007669"/>
    <property type="project" value="UniProtKB-SubCell"/>
</dbReference>
<dbReference type="GO" id="GO:0016711">
    <property type="term" value="F:flavonoid 3'-monooxygenase activity"/>
    <property type="evidence" value="ECO:0007669"/>
    <property type="project" value="UniProtKB-EC"/>
</dbReference>
<dbReference type="GO" id="GO:0020037">
    <property type="term" value="F:heme binding"/>
    <property type="evidence" value="ECO:0007669"/>
    <property type="project" value="InterPro"/>
</dbReference>
<dbReference type="GO" id="GO:0005506">
    <property type="term" value="F:iron ion binding"/>
    <property type="evidence" value="ECO:0007669"/>
    <property type="project" value="InterPro"/>
</dbReference>
<dbReference type="GO" id="GO:0009813">
    <property type="term" value="P:flavonoid biosynthetic process"/>
    <property type="evidence" value="ECO:0007669"/>
    <property type="project" value="UniProtKB-KW"/>
</dbReference>
<dbReference type="FunFam" id="1.10.630.10:FF:000097">
    <property type="entry name" value="Cytochrome P-450 19"/>
    <property type="match status" value="1"/>
</dbReference>
<dbReference type="Gene3D" id="1.10.630.10">
    <property type="entry name" value="Cytochrome P450"/>
    <property type="match status" value="1"/>
</dbReference>
<dbReference type="InterPro" id="IPR001128">
    <property type="entry name" value="Cyt_P450"/>
</dbReference>
<dbReference type="InterPro" id="IPR017972">
    <property type="entry name" value="Cyt_P450_CS"/>
</dbReference>
<dbReference type="InterPro" id="IPR002401">
    <property type="entry name" value="Cyt_P450_E_grp-I"/>
</dbReference>
<dbReference type="InterPro" id="IPR036396">
    <property type="entry name" value="Cyt_P450_sf"/>
</dbReference>
<dbReference type="PANTHER" id="PTHR47944">
    <property type="entry name" value="CYTOCHROME P450 98A9"/>
    <property type="match status" value="1"/>
</dbReference>
<dbReference type="PANTHER" id="PTHR47944:SF18">
    <property type="entry name" value="FLAVONOID 3'-MONOOXYGENASE"/>
    <property type="match status" value="1"/>
</dbReference>
<dbReference type="Pfam" id="PF00067">
    <property type="entry name" value="p450"/>
    <property type="match status" value="1"/>
</dbReference>
<dbReference type="PRINTS" id="PR00463">
    <property type="entry name" value="EP450I"/>
</dbReference>
<dbReference type="PRINTS" id="PR00385">
    <property type="entry name" value="P450"/>
</dbReference>
<dbReference type="SUPFAM" id="SSF48264">
    <property type="entry name" value="Cytochrome P450"/>
    <property type="match status" value="1"/>
</dbReference>
<dbReference type="PROSITE" id="PS00086">
    <property type="entry name" value="CYTOCHROME_P450"/>
    <property type="match status" value="1"/>
</dbReference>
<feature type="chain" id="PRO_0000448074" description="Flavonoid 3'-monooxygenase CYP75B137">
    <location>
        <begin position="1"/>
        <end position="508"/>
    </location>
</feature>
<feature type="transmembrane region" description="Helical" evidence="2">
    <location>
        <begin position="2"/>
        <end position="22"/>
    </location>
</feature>
<feature type="binding site" description="axial binding residue" evidence="1">
    <location>
        <position position="445"/>
    </location>
    <ligand>
        <name>heme</name>
        <dbReference type="ChEBI" id="CHEBI:30413"/>
    </ligand>
    <ligandPart>
        <name>Fe</name>
        <dbReference type="ChEBI" id="CHEBI:18248"/>
    </ligandPart>
</feature>
<proteinExistence type="evidence at protein level"/>